<protein>
    <recommendedName>
        <fullName evidence="1">Glucose-6-phosphate isomerase</fullName>
        <shortName evidence="1">GPI</shortName>
        <ecNumber evidence="1">5.3.1.9</ecNumber>
    </recommendedName>
    <alternativeName>
        <fullName evidence="1">Phosphoglucose isomerase</fullName>
        <shortName evidence="1">PGI</shortName>
    </alternativeName>
    <alternativeName>
        <fullName evidence="1">Phosphohexose isomerase</fullName>
        <shortName evidence="1">PHI</shortName>
    </alternativeName>
</protein>
<proteinExistence type="inferred from homology"/>
<accession>Q28QX4</accession>
<organism>
    <name type="scientific">Jannaschia sp. (strain CCS1)</name>
    <dbReference type="NCBI Taxonomy" id="290400"/>
    <lineage>
        <taxon>Bacteria</taxon>
        <taxon>Pseudomonadati</taxon>
        <taxon>Pseudomonadota</taxon>
        <taxon>Alphaproteobacteria</taxon>
        <taxon>Rhodobacterales</taxon>
        <taxon>Roseobacteraceae</taxon>
        <taxon>Jannaschia</taxon>
    </lineage>
</organism>
<reference key="1">
    <citation type="submission" date="2006-02" db="EMBL/GenBank/DDBJ databases">
        <title>Complete sequence of chromosome of Jannaschia sp. CCS1.</title>
        <authorList>
            <consortium name="US DOE Joint Genome Institute"/>
            <person name="Copeland A."/>
            <person name="Lucas S."/>
            <person name="Lapidus A."/>
            <person name="Barry K."/>
            <person name="Detter J.C."/>
            <person name="Glavina del Rio T."/>
            <person name="Hammon N."/>
            <person name="Israni S."/>
            <person name="Pitluck S."/>
            <person name="Brettin T."/>
            <person name="Bruce D."/>
            <person name="Han C."/>
            <person name="Tapia R."/>
            <person name="Gilna P."/>
            <person name="Chertkov O."/>
            <person name="Saunders E."/>
            <person name="Schmutz J."/>
            <person name="Larimer F."/>
            <person name="Land M."/>
            <person name="Kyrpides N."/>
            <person name="Lykidis A."/>
            <person name="Moran M.A."/>
            <person name="Belas R."/>
            <person name="Ye W."/>
            <person name="Buchan A."/>
            <person name="Gonzalez J.M."/>
            <person name="Schell M.A."/>
            <person name="Richardson P."/>
        </authorList>
    </citation>
    <scope>NUCLEOTIDE SEQUENCE [LARGE SCALE GENOMIC DNA]</scope>
    <source>
        <strain>CCS1</strain>
    </source>
</reference>
<feature type="chain" id="PRO_0000252625" description="Glucose-6-phosphate isomerase">
    <location>
        <begin position="1"/>
        <end position="537"/>
    </location>
</feature>
<feature type="active site" description="Proton donor" evidence="1">
    <location>
        <position position="341"/>
    </location>
</feature>
<feature type="active site" evidence="1">
    <location>
        <position position="372"/>
    </location>
</feature>
<feature type="active site" evidence="1">
    <location>
        <position position="501"/>
    </location>
</feature>
<keyword id="KW-0963">Cytoplasm</keyword>
<keyword id="KW-0312">Gluconeogenesis</keyword>
<keyword id="KW-0324">Glycolysis</keyword>
<keyword id="KW-0413">Isomerase</keyword>
<keyword id="KW-1185">Reference proteome</keyword>
<comment type="function">
    <text evidence="1">Catalyzes the reversible isomerization of glucose-6-phosphate to fructose-6-phosphate.</text>
</comment>
<comment type="catalytic activity">
    <reaction evidence="1">
        <text>alpha-D-glucose 6-phosphate = beta-D-fructose 6-phosphate</text>
        <dbReference type="Rhea" id="RHEA:11816"/>
        <dbReference type="ChEBI" id="CHEBI:57634"/>
        <dbReference type="ChEBI" id="CHEBI:58225"/>
        <dbReference type="EC" id="5.3.1.9"/>
    </reaction>
</comment>
<comment type="pathway">
    <text evidence="1">Carbohydrate biosynthesis; gluconeogenesis.</text>
</comment>
<comment type="pathway">
    <text evidence="1">Carbohydrate degradation; glycolysis; D-glyceraldehyde 3-phosphate and glycerone phosphate from D-glucose: step 2/4.</text>
</comment>
<comment type="subcellular location">
    <subcellularLocation>
        <location evidence="1">Cytoplasm</location>
    </subcellularLocation>
</comment>
<comment type="similarity">
    <text evidence="1">Belongs to the GPI family.</text>
</comment>
<dbReference type="EC" id="5.3.1.9" evidence="1"/>
<dbReference type="EMBL" id="CP000264">
    <property type="protein sequence ID" value="ABD54888.1"/>
    <property type="molecule type" value="Genomic_DNA"/>
</dbReference>
<dbReference type="RefSeq" id="WP_011455093.1">
    <property type="nucleotide sequence ID" value="NC_007802.1"/>
</dbReference>
<dbReference type="SMR" id="Q28QX4"/>
<dbReference type="STRING" id="290400.Jann_1971"/>
<dbReference type="KEGG" id="jan:Jann_1971"/>
<dbReference type="eggNOG" id="COG0166">
    <property type="taxonomic scope" value="Bacteria"/>
</dbReference>
<dbReference type="HOGENOM" id="CLU_017947_3_1_5"/>
<dbReference type="OrthoDB" id="140919at2"/>
<dbReference type="UniPathway" id="UPA00109">
    <property type="reaction ID" value="UER00181"/>
</dbReference>
<dbReference type="UniPathway" id="UPA00138"/>
<dbReference type="Proteomes" id="UP000008326">
    <property type="component" value="Chromosome"/>
</dbReference>
<dbReference type="GO" id="GO:0005829">
    <property type="term" value="C:cytosol"/>
    <property type="evidence" value="ECO:0007669"/>
    <property type="project" value="TreeGrafter"/>
</dbReference>
<dbReference type="GO" id="GO:0097367">
    <property type="term" value="F:carbohydrate derivative binding"/>
    <property type="evidence" value="ECO:0007669"/>
    <property type="project" value="InterPro"/>
</dbReference>
<dbReference type="GO" id="GO:0004347">
    <property type="term" value="F:glucose-6-phosphate isomerase activity"/>
    <property type="evidence" value="ECO:0007669"/>
    <property type="project" value="UniProtKB-UniRule"/>
</dbReference>
<dbReference type="GO" id="GO:0048029">
    <property type="term" value="F:monosaccharide binding"/>
    <property type="evidence" value="ECO:0007669"/>
    <property type="project" value="TreeGrafter"/>
</dbReference>
<dbReference type="GO" id="GO:0006094">
    <property type="term" value="P:gluconeogenesis"/>
    <property type="evidence" value="ECO:0007669"/>
    <property type="project" value="UniProtKB-UniRule"/>
</dbReference>
<dbReference type="GO" id="GO:0051156">
    <property type="term" value="P:glucose 6-phosphate metabolic process"/>
    <property type="evidence" value="ECO:0007669"/>
    <property type="project" value="TreeGrafter"/>
</dbReference>
<dbReference type="GO" id="GO:0006096">
    <property type="term" value="P:glycolytic process"/>
    <property type="evidence" value="ECO:0007669"/>
    <property type="project" value="UniProtKB-UniRule"/>
</dbReference>
<dbReference type="CDD" id="cd05015">
    <property type="entry name" value="SIS_PGI_1"/>
    <property type="match status" value="1"/>
</dbReference>
<dbReference type="CDD" id="cd05016">
    <property type="entry name" value="SIS_PGI_2"/>
    <property type="match status" value="1"/>
</dbReference>
<dbReference type="Gene3D" id="1.10.1390.10">
    <property type="match status" value="1"/>
</dbReference>
<dbReference type="Gene3D" id="3.40.50.10490">
    <property type="entry name" value="Glucose-6-phosphate isomerase like protein, domain 1"/>
    <property type="match status" value="2"/>
</dbReference>
<dbReference type="HAMAP" id="MF_00473">
    <property type="entry name" value="G6P_isomerase"/>
    <property type="match status" value="1"/>
</dbReference>
<dbReference type="InterPro" id="IPR001672">
    <property type="entry name" value="G6P_Isomerase"/>
</dbReference>
<dbReference type="InterPro" id="IPR023096">
    <property type="entry name" value="G6P_Isomerase_C"/>
</dbReference>
<dbReference type="InterPro" id="IPR018189">
    <property type="entry name" value="Phosphoglucose_isomerase_CS"/>
</dbReference>
<dbReference type="InterPro" id="IPR046348">
    <property type="entry name" value="SIS_dom_sf"/>
</dbReference>
<dbReference type="InterPro" id="IPR035476">
    <property type="entry name" value="SIS_PGI_1"/>
</dbReference>
<dbReference type="InterPro" id="IPR035482">
    <property type="entry name" value="SIS_PGI_2"/>
</dbReference>
<dbReference type="NCBIfam" id="NF001211">
    <property type="entry name" value="PRK00179.1"/>
    <property type="match status" value="1"/>
</dbReference>
<dbReference type="PANTHER" id="PTHR11469">
    <property type="entry name" value="GLUCOSE-6-PHOSPHATE ISOMERASE"/>
    <property type="match status" value="1"/>
</dbReference>
<dbReference type="PANTHER" id="PTHR11469:SF1">
    <property type="entry name" value="GLUCOSE-6-PHOSPHATE ISOMERASE"/>
    <property type="match status" value="1"/>
</dbReference>
<dbReference type="Pfam" id="PF00342">
    <property type="entry name" value="PGI"/>
    <property type="match status" value="1"/>
</dbReference>
<dbReference type="PRINTS" id="PR00662">
    <property type="entry name" value="G6PISOMERASE"/>
</dbReference>
<dbReference type="SUPFAM" id="SSF53697">
    <property type="entry name" value="SIS domain"/>
    <property type="match status" value="1"/>
</dbReference>
<dbReference type="PROSITE" id="PS00765">
    <property type="entry name" value="P_GLUCOSE_ISOMERASE_1"/>
    <property type="match status" value="1"/>
</dbReference>
<dbReference type="PROSITE" id="PS00174">
    <property type="entry name" value="P_GLUCOSE_ISOMERASE_2"/>
    <property type="match status" value="1"/>
</dbReference>
<dbReference type="PROSITE" id="PS51463">
    <property type="entry name" value="P_GLUCOSE_ISOMERASE_3"/>
    <property type="match status" value="1"/>
</dbReference>
<sequence length="537" mass="57868">MGEIWSELKAHHSAKSRRKMLDLFEKGNRVQAFSATVDGLYFDFSKTNLDDGALSLLLELARVKGVESRRAAMFAGDKINETEGRAVLHTALRAPAGPIKVDGQDIMPGVLETRARCFTFAQQVRDGSFTAQGGRITDVVNIGIGGSDLGPAMATLALAPYHDGPRLHYVSNVDGADMNGALQGIDPKTTLVIVASKTFTTIETMTNAQTARDWMAQDVADPSAQFVALSSSTEKAGAFGIPPERTFGFEDWVGGRYSLWGPIGLGLMIAIGPEAFQQFLDGAATMDRHFQEADLADNLPVLLALVGMWHNQVEGHATRAVLPYDNRLSRLPAYLQQLEMESNGKSVAMDGSALQQNSGPVVWGEPGTNGQHAFYQLIHQGTRVVPCEFLVAAKGHEPDLTHHHRLLVANCLAQSEALMRGRSMEEARALMAAKGLEGAELERQAAHRVFPGNRPSTTLLYDQLTPFTLGQIIALYEHRVFVEGVILGINSFDQWGVELGKELATALEPVLTGKDDGAGKDGSTLALVDAVKAVGGI</sequence>
<name>G6PI_JANSC</name>
<gene>
    <name evidence="1" type="primary">pgi</name>
    <name type="ordered locus">Jann_1971</name>
</gene>
<evidence type="ECO:0000255" key="1">
    <source>
        <dbReference type="HAMAP-Rule" id="MF_00473"/>
    </source>
</evidence>